<evidence type="ECO:0000255" key="1">
    <source>
        <dbReference type="PROSITE-ProRule" id="PRU00405"/>
    </source>
</evidence>
<organism>
    <name type="scientific">Nycticebus coucang</name>
    <name type="common">Slow loris</name>
    <dbReference type="NCBI Taxonomy" id="9470"/>
    <lineage>
        <taxon>Eukaryota</taxon>
        <taxon>Metazoa</taxon>
        <taxon>Chordata</taxon>
        <taxon>Craniata</taxon>
        <taxon>Vertebrata</taxon>
        <taxon>Euteleostomi</taxon>
        <taxon>Mammalia</taxon>
        <taxon>Eutheria</taxon>
        <taxon>Euarchontoglires</taxon>
        <taxon>Primates</taxon>
        <taxon>Strepsirrhini</taxon>
        <taxon>Lorisiformes</taxon>
        <taxon>Lorisidae</taxon>
        <taxon>Nycticebus</taxon>
    </lineage>
</organism>
<feature type="chain" id="PRO_0000084427" description="LINE-1 reverse transcriptase homolog">
    <location>
        <begin position="1"/>
        <end position="1260"/>
    </location>
</feature>
<feature type="domain" description="Reverse transcriptase" evidence="1">
    <location>
        <begin position="497"/>
        <end position="772"/>
    </location>
</feature>
<feature type="domain" description="DUF1725">
    <location>
        <begin position="1242"/>
        <end position="1260"/>
    </location>
</feature>
<feature type="binding site" evidence="1">
    <location>
        <position position="599"/>
    </location>
    <ligand>
        <name>Mg(2+)</name>
        <dbReference type="ChEBI" id="CHEBI:18420"/>
        <note>catalytic</note>
    </ligand>
</feature>
<feature type="binding site" evidence="1">
    <location>
        <position position="701"/>
    </location>
    <ligand>
        <name>Mg(2+)</name>
        <dbReference type="ChEBI" id="CHEBI:18420"/>
        <note>catalytic</note>
    </ligand>
</feature>
<feature type="binding site" evidence="1">
    <location>
        <position position="702"/>
    </location>
    <ligand>
        <name>Mg(2+)</name>
        <dbReference type="ChEBI" id="CHEBI:18420"/>
        <note>catalytic</note>
    </ligand>
</feature>
<name>LIN1_NYCCO</name>
<comment type="catalytic activity">
    <reaction evidence="1">
        <text>DNA(n) + a 2'-deoxyribonucleoside 5'-triphosphate = DNA(n+1) + diphosphate</text>
        <dbReference type="Rhea" id="RHEA:22508"/>
        <dbReference type="Rhea" id="RHEA-COMP:17339"/>
        <dbReference type="Rhea" id="RHEA-COMP:17340"/>
        <dbReference type="ChEBI" id="CHEBI:33019"/>
        <dbReference type="ChEBI" id="CHEBI:61560"/>
        <dbReference type="ChEBI" id="CHEBI:173112"/>
        <dbReference type="EC" id="2.7.7.49"/>
    </reaction>
</comment>
<comment type="miscellaneous">
    <text>This sequence was constructed from an alignment of six sequences, determined by these authors but not shown, belonging to the LINE-1 family.</text>
</comment>
<accession>P08548</accession>
<dbReference type="EC" id="2.7.7.49"/>
<dbReference type="PIR" id="B25313">
    <property type="entry name" value="GNLRL1"/>
</dbReference>
<dbReference type="SMR" id="P08548"/>
<dbReference type="GO" id="GO:0046872">
    <property type="term" value="F:metal ion binding"/>
    <property type="evidence" value="ECO:0007669"/>
    <property type="project" value="UniProtKB-KW"/>
</dbReference>
<dbReference type="GO" id="GO:0003964">
    <property type="term" value="F:RNA-directed DNA polymerase activity"/>
    <property type="evidence" value="ECO:0007669"/>
    <property type="project" value="UniProtKB-KW"/>
</dbReference>
<dbReference type="CDD" id="cd09076">
    <property type="entry name" value="L1-EN"/>
    <property type="match status" value="1"/>
</dbReference>
<dbReference type="CDD" id="cd01650">
    <property type="entry name" value="RT_nLTR_like"/>
    <property type="match status" value="1"/>
</dbReference>
<dbReference type="Gene3D" id="3.60.10.10">
    <property type="entry name" value="Endonuclease/exonuclease/phosphatase"/>
    <property type="match status" value="1"/>
</dbReference>
<dbReference type="InterPro" id="IPR043502">
    <property type="entry name" value="DNA/RNA_pol_sf"/>
</dbReference>
<dbReference type="InterPro" id="IPR036691">
    <property type="entry name" value="Endo/exonu/phosph_ase_sf"/>
</dbReference>
<dbReference type="InterPro" id="IPR005135">
    <property type="entry name" value="Endo/exonuclease/phosphatase"/>
</dbReference>
<dbReference type="InterPro" id="IPR000477">
    <property type="entry name" value="RT_dom"/>
</dbReference>
<dbReference type="PANTHER" id="PTHR19446">
    <property type="entry name" value="REVERSE TRANSCRIPTASES"/>
    <property type="match status" value="1"/>
</dbReference>
<dbReference type="Pfam" id="PF03372">
    <property type="entry name" value="Exo_endo_phos"/>
    <property type="match status" value="1"/>
</dbReference>
<dbReference type="Pfam" id="PF00078">
    <property type="entry name" value="RVT_1"/>
    <property type="match status" value="1"/>
</dbReference>
<dbReference type="SUPFAM" id="SSF56672">
    <property type="entry name" value="DNA/RNA polymerases"/>
    <property type="match status" value="1"/>
</dbReference>
<dbReference type="SUPFAM" id="SSF56219">
    <property type="entry name" value="DNase I-like"/>
    <property type="match status" value="1"/>
</dbReference>
<dbReference type="PROSITE" id="PS50878">
    <property type="entry name" value="RT_POL"/>
    <property type="match status" value="1"/>
</dbReference>
<keyword id="KW-0460">Magnesium</keyword>
<keyword id="KW-0479">Metal-binding</keyword>
<keyword id="KW-0548">Nucleotidyltransferase</keyword>
<keyword id="KW-0695">RNA-directed DNA polymerase</keyword>
<keyword id="KW-0808">Transferase</keyword>
<reference key="1">
    <citation type="journal article" date="1986" name="Nature">
        <title>L1 family of repetitive DNA sequences in primates may be derived from a sequence encoding a reverse transcriptase-related protein.</title>
        <authorList>
            <person name="Hattori M."/>
            <person name="Kuhara S."/>
            <person name="Takenaka O."/>
            <person name="Sakaki Y."/>
        </authorList>
    </citation>
    <scope>NUCLEOTIDE SEQUENCE [GENOMIC DNA]</scope>
</reference>
<sequence length="1260" mass="147043">TGLSKGLSIFSINVNGLNCPLKRHRLADWIQKLKPDICCIQESHLTLKDKYRLKVKGWSSIFQANGKQKKAGIAILFADAIGFKPTKIRKDKDGHFIFVKGNTQYDEISIINIYAPNHNAPQFIRETLTDMSNLISSTSIVVGDFNTPLAVLDRSSKKKLSKEILDLNSTIQHLDLTDIYRTFHPNKTEYTFFSSAHGTYSKIDHILGHKSNLSKFKKIEIIPCIFSDHHGIKVELNNNRNLHTHTKTWKLNNLMLKDTWVIDEIKKEITKFLEQNNNQDTNYQNLWDTAKAVLRGKFIALQAFLKKTEREEVNNLMGHLKQLEKEEHSNPKPSRRKEITKIRAELNEIENKRIIQQINKSKSWFFEKINKIDKPLANLTRKKRVKSLISSIRNGNDEITTDPSEIQKILNEYYKKLYSHKYENLKEIDQYLEACHLPRLSQKEVEMLNRPISSSEIASTIQNLPKKKSPGPDGFTSEFYQTFKEELVPILLNLFQNIEKEGILPNTFYEANITLIPKPGKDPTRKENYRPISLMNIDAKILNKILTNRIQQHIKKIIHHDQVGFIPGSQGWFNIRKSINVIQHINKLKNKDHMILSIDAEKAFDNIQHPFMIRTLKKIGIEGTFLKLIEAIYSKPTANIILNGVKLKSFPLRSGTRQGCPLSPLLFNIVMEVLAIAIREEKAIKGIHIGSEEIKLSLFADDMIVYLENTRDSTTKLLEVIKEYSNVSGYKINTHKSVAFIYTNNNQAEKTVKDSIPFTVVPKKMKYLGVYLTKDVKDLYKENYETLRKEIAEDVNKWKNIPCSWLGRINIVKMSILPKAIYNFNAIPIKAPLSYFKDLEKIILHFIWNQKKPQIAKTLLSNKNKAGGITLPDLRLYYKSIVIKTAWYWHKNREVDVWNRIENQEMDPATYHYLIFDKPIKNIQWGKDSLFNKWCWVNWLAICRRLKLDPHLSPLTKIDSHWIKDLNLRHETIKILEESAGKTLEGISLGEYFMRRTPQAIEAVSKIHYWDLIKLKSFCTAKNIVSKASRQPSEWEKIFAGYTSDKGLITRIHRELKHINKKRTRDPISGWARDLKRNFSKEDRHTIYKHMKKSSSSLIIREMQIKTTLRYHLTPVRVAHITKSPNQRCWRGCGGKGTLLHCWWECPLIRSFWKDVWRILRDLKIDLPFDPIIPLLGLYPEDQKSQYNKDICTRMFIAAQFIIAKSWKKPKCPSTHEWTSKLWYMYTMEYYAALKKDGDFTSFMFTWMELEHILLSKVSQ</sequence>
<proteinExistence type="predicted"/>
<protein>
    <recommendedName>
        <fullName>LINE-1 reverse transcriptase homolog</fullName>
        <ecNumber>2.7.7.49</ecNumber>
    </recommendedName>
</protein>